<evidence type="ECO:0000250" key="1"/>
<evidence type="ECO:0000255" key="2"/>
<evidence type="ECO:0000255" key="3">
    <source>
        <dbReference type="PROSITE-ProRule" id="PRU00076"/>
    </source>
</evidence>
<comment type="function">
    <text evidence="1">TGF alpha is a mitogenic polypeptide that is able to bind to the EGF receptor/EGFR and to act synergistically with TGF beta to promote anchorage-independent cell proliferation in soft agar.</text>
</comment>
<comment type="subunit">
    <text evidence="1">Interacts with the PDZ domains of MAGI3, SDCBP and SNTA1. The interaction with SDCBP, is required for the targeting to the cell surface. In the endoplasmic reticulum, in its immature form (i.e. with a prosegment and lacking full N-glycosylation), interacts with CNIH. In the Golgi apparatus, may form a complex with CNIH and GORASP2. Interacts (via cytoplasmic C-terminal domain) with NKD2 (By similarity).</text>
</comment>
<comment type="subcellular location">
    <molecule>Transforming growth factor alpha</molecule>
    <subcellularLocation>
        <location evidence="1">Secreted</location>
        <location evidence="1">Extracellular space</location>
    </subcellularLocation>
</comment>
<comment type="subcellular location">
    <molecule>Protransforming growth factor alpha</molecule>
    <subcellularLocation>
        <location evidence="1">Cell membrane</location>
        <topology evidence="1">Single-pass type I membrane protein</topology>
    </subcellularLocation>
</comment>
<organism>
    <name type="scientific">Sus scrofa</name>
    <name type="common">Pig</name>
    <dbReference type="NCBI Taxonomy" id="9823"/>
    <lineage>
        <taxon>Eukaryota</taxon>
        <taxon>Metazoa</taxon>
        <taxon>Chordata</taxon>
        <taxon>Craniata</taxon>
        <taxon>Vertebrata</taxon>
        <taxon>Euteleostomi</taxon>
        <taxon>Mammalia</taxon>
        <taxon>Eutheria</taxon>
        <taxon>Laurasiatheria</taxon>
        <taxon>Artiodactyla</taxon>
        <taxon>Suina</taxon>
        <taxon>Suidae</taxon>
        <taxon>Sus</taxon>
    </lineage>
</organism>
<keyword id="KW-1003">Cell membrane</keyword>
<keyword id="KW-1015">Disulfide bond</keyword>
<keyword id="KW-0245">EGF-like domain</keyword>
<keyword id="KW-0325">Glycoprotein</keyword>
<keyword id="KW-0339">Growth factor</keyword>
<keyword id="KW-0449">Lipoprotein</keyword>
<keyword id="KW-0472">Membrane</keyword>
<keyword id="KW-0497">Mitogen</keyword>
<keyword id="KW-0564">Palmitate</keyword>
<keyword id="KW-1185">Reference proteome</keyword>
<keyword id="KW-0964">Secreted</keyword>
<keyword id="KW-0732">Signal</keyword>
<keyword id="KW-0812">Transmembrane</keyword>
<keyword id="KW-1133">Transmembrane helix</keyword>
<name>TGFA_PIG</name>
<proteinExistence type="evidence at transcript level"/>
<protein>
    <recommendedName>
        <fullName>Protransforming growth factor alpha</fullName>
    </recommendedName>
    <component>
        <recommendedName>
            <fullName>Transforming growth factor alpha</fullName>
            <shortName>TGF-alpha</shortName>
        </recommendedName>
        <alternativeName>
            <fullName>EGF-like TGF</fullName>
            <shortName>ETGF</shortName>
        </alternativeName>
        <alternativeName>
            <fullName>TGF type 1</fullName>
        </alternativeName>
    </component>
</protein>
<feature type="signal peptide" evidence="1">
    <location>
        <begin position="1"/>
        <end position="23"/>
    </location>
</feature>
<feature type="chain" id="PRO_0000302747" description="Protransforming growth factor alpha">
    <location>
        <begin position="24"/>
        <end position="160"/>
    </location>
</feature>
<feature type="propeptide" id="PRO_0000007761" description="Removed in mature form" evidence="1">
    <location>
        <begin position="24"/>
        <end position="39"/>
    </location>
</feature>
<feature type="chain" id="PRO_0000007762" description="Transforming growth factor alpha">
    <location>
        <begin position="40"/>
        <end position="89"/>
    </location>
</feature>
<feature type="propeptide" id="PRO_0000007763" description="Removed in mature form">
    <location>
        <begin position="90"/>
        <end position="160"/>
    </location>
</feature>
<feature type="topological domain" description="Extracellular" evidence="2">
    <location>
        <begin position="24"/>
        <end position="98"/>
    </location>
</feature>
<feature type="transmembrane region" description="Helical" evidence="1">
    <location>
        <begin position="99"/>
        <end position="124"/>
    </location>
</feature>
<feature type="topological domain" description="Cytoplasmic" evidence="2">
    <location>
        <begin position="125"/>
        <end position="160"/>
    </location>
</feature>
<feature type="domain" description="EGF-like" evidence="3">
    <location>
        <begin position="43"/>
        <end position="83"/>
    </location>
</feature>
<feature type="lipid moiety-binding region" description="S-palmitoyl cysteine" evidence="1">
    <location>
        <position position="153"/>
    </location>
</feature>
<feature type="lipid moiety-binding region" description="S-palmitoyl cysteine" evidence="1">
    <location>
        <position position="154"/>
    </location>
</feature>
<feature type="glycosylation site" description="N-linked (GlcNAc...) asparagine" evidence="2">
    <location>
        <position position="25"/>
    </location>
</feature>
<feature type="disulfide bond" evidence="3">
    <location>
        <begin position="47"/>
        <end position="60"/>
    </location>
</feature>
<feature type="disulfide bond" evidence="3">
    <location>
        <begin position="55"/>
        <end position="71"/>
    </location>
</feature>
<feature type="disulfide bond" evidence="3">
    <location>
        <begin position="73"/>
        <end position="82"/>
    </location>
</feature>
<gene>
    <name type="primary">TGFA</name>
</gene>
<dbReference type="EMBL" id="X71014">
    <property type="protein sequence ID" value="CAA50333.1"/>
    <property type="molecule type" value="mRNA"/>
</dbReference>
<dbReference type="PIR" id="S39795">
    <property type="entry name" value="S39795"/>
</dbReference>
<dbReference type="RefSeq" id="NP_999416.1">
    <property type="nucleotide sequence ID" value="NM_214251.1"/>
</dbReference>
<dbReference type="BMRB" id="Q06922"/>
<dbReference type="SMR" id="Q06922"/>
<dbReference type="FunCoup" id="Q06922">
    <property type="interactions" value="347"/>
</dbReference>
<dbReference type="STRING" id="9823.ENSSSCP00000008889"/>
<dbReference type="GlyCosmos" id="Q06922">
    <property type="glycosylation" value="1 site, No reported glycans"/>
</dbReference>
<dbReference type="GlyGen" id="Q06922">
    <property type="glycosylation" value="1 site"/>
</dbReference>
<dbReference type="PaxDb" id="9823-ENSSSCP00000008889"/>
<dbReference type="GeneID" id="397484"/>
<dbReference type="KEGG" id="ssc:397484"/>
<dbReference type="CTD" id="7039"/>
<dbReference type="eggNOG" id="ENOG502S1CF">
    <property type="taxonomic scope" value="Eukaryota"/>
</dbReference>
<dbReference type="InParanoid" id="Q06922"/>
<dbReference type="OrthoDB" id="9946464at2759"/>
<dbReference type="Proteomes" id="UP000008227">
    <property type="component" value="Unplaced"/>
</dbReference>
<dbReference type="Proteomes" id="UP000314985">
    <property type="component" value="Unplaced"/>
</dbReference>
<dbReference type="Proteomes" id="UP000694570">
    <property type="component" value="Unplaced"/>
</dbReference>
<dbReference type="Proteomes" id="UP000694571">
    <property type="component" value="Unplaced"/>
</dbReference>
<dbReference type="Proteomes" id="UP000694720">
    <property type="component" value="Unplaced"/>
</dbReference>
<dbReference type="Proteomes" id="UP000694722">
    <property type="component" value="Unplaced"/>
</dbReference>
<dbReference type="Proteomes" id="UP000694723">
    <property type="component" value="Unplaced"/>
</dbReference>
<dbReference type="Proteomes" id="UP000694724">
    <property type="component" value="Unplaced"/>
</dbReference>
<dbReference type="Proteomes" id="UP000694725">
    <property type="component" value="Unplaced"/>
</dbReference>
<dbReference type="Proteomes" id="UP000694726">
    <property type="component" value="Unplaced"/>
</dbReference>
<dbReference type="Proteomes" id="UP000694727">
    <property type="component" value="Unplaced"/>
</dbReference>
<dbReference type="Proteomes" id="UP000694728">
    <property type="component" value="Unplaced"/>
</dbReference>
<dbReference type="GO" id="GO:0005615">
    <property type="term" value="C:extracellular space"/>
    <property type="evidence" value="ECO:0000318"/>
    <property type="project" value="GO_Central"/>
</dbReference>
<dbReference type="GO" id="GO:0005886">
    <property type="term" value="C:plasma membrane"/>
    <property type="evidence" value="ECO:0007669"/>
    <property type="project" value="UniProtKB-SubCell"/>
</dbReference>
<dbReference type="GO" id="GO:0005154">
    <property type="term" value="F:epidermal growth factor receptor binding"/>
    <property type="evidence" value="ECO:0000250"/>
    <property type="project" value="HGNC"/>
</dbReference>
<dbReference type="GO" id="GO:0008083">
    <property type="term" value="F:growth factor activity"/>
    <property type="evidence" value="ECO:0000250"/>
    <property type="project" value="HGNC-UCL"/>
</dbReference>
<dbReference type="GO" id="GO:0007166">
    <property type="term" value="P:cell surface receptor signaling pathway"/>
    <property type="evidence" value="ECO:0000250"/>
    <property type="project" value="HGNC-UCL"/>
</dbReference>
<dbReference type="GO" id="GO:0007173">
    <property type="term" value="P:epidermal growth factor receptor signaling pathway"/>
    <property type="evidence" value="ECO:0000318"/>
    <property type="project" value="GO_Central"/>
</dbReference>
<dbReference type="GO" id="GO:0051781">
    <property type="term" value="P:positive regulation of cell division"/>
    <property type="evidence" value="ECO:0007669"/>
    <property type="project" value="UniProtKB-KW"/>
</dbReference>
<dbReference type="GO" id="GO:0008284">
    <property type="term" value="P:positive regulation of cell population proliferation"/>
    <property type="evidence" value="ECO:0000318"/>
    <property type="project" value="GO_Central"/>
</dbReference>
<dbReference type="GO" id="GO:0050679">
    <property type="term" value="P:positive regulation of epithelial cell proliferation"/>
    <property type="evidence" value="ECO:0000250"/>
    <property type="project" value="HGNC-UCL"/>
</dbReference>
<dbReference type="GO" id="GO:0043410">
    <property type="term" value="P:positive regulation of MAPK cascade"/>
    <property type="evidence" value="ECO:0000250"/>
    <property type="project" value="HGNC-UCL"/>
</dbReference>
<dbReference type="GO" id="GO:0045840">
    <property type="term" value="P:positive regulation of mitotic nuclear division"/>
    <property type="evidence" value="ECO:0000318"/>
    <property type="project" value="GO_Central"/>
</dbReference>
<dbReference type="FunFam" id="2.10.25.10:FF:000182">
    <property type="entry name" value="Protransforming growth factor alpha"/>
    <property type="match status" value="1"/>
</dbReference>
<dbReference type="Gene3D" id="2.10.25.10">
    <property type="entry name" value="Laminin"/>
    <property type="match status" value="1"/>
</dbReference>
<dbReference type="InterPro" id="IPR000742">
    <property type="entry name" value="EGF-like_dom"/>
</dbReference>
<dbReference type="PANTHER" id="PTHR10740:SF1">
    <property type="entry name" value="PROTRANSFORMING GROWTH FACTOR ALPHA"/>
    <property type="match status" value="1"/>
</dbReference>
<dbReference type="PANTHER" id="PTHR10740">
    <property type="entry name" value="TRANSFORMING GROWTH FACTOR ALPHA"/>
    <property type="match status" value="1"/>
</dbReference>
<dbReference type="PRINTS" id="PR00009">
    <property type="entry name" value="EGFTGF"/>
</dbReference>
<dbReference type="SUPFAM" id="SSF57196">
    <property type="entry name" value="EGF/Laminin"/>
    <property type="match status" value="1"/>
</dbReference>
<dbReference type="PROSITE" id="PS00022">
    <property type="entry name" value="EGF_1"/>
    <property type="match status" value="1"/>
</dbReference>
<dbReference type="PROSITE" id="PS01186">
    <property type="entry name" value="EGF_2"/>
    <property type="match status" value="1"/>
</dbReference>
<dbReference type="PROSITE" id="PS50026">
    <property type="entry name" value="EGF_3"/>
    <property type="match status" value="1"/>
</dbReference>
<accession>Q06922</accession>
<sequence>MVPSAGQFALFALGILLAVCQALENSTSALSADPPIAAAVVSHFNDCPDSHSQFCFHGTCRFLVQEDKPACVCHSGYVGARCEHADLLAVVAASQKKQAITALVVVSIVALAVLIITCVLIHCCQVRKHCEWCRALICRHEKPSALLKGRTACCHSETVV</sequence>
<reference key="1">
    <citation type="journal article" date="1993" name="Biochem. J.">
        <title>Molecular cloning and tissue distribution of pig transforming growth factor alpha.</title>
        <authorList>
            <person name="Vaughan T.J."/>
            <person name="James P.S."/>
            <person name="Pascall J.C."/>
            <person name="Brown K.D."/>
        </authorList>
    </citation>
    <scope>NUCLEOTIDE SEQUENCE [MRNA]</scope>
</reference>